<protein>
    <recommendedName>
        <fullName evidence="7">Histone-lysine N-methyltransferase KMT5C</fullName>
    </recommendedName>
    <alternativeName>
        <fullName evidence="3">Lysine-specific methyltransferase 5C</fullName>
    </alternativeName>
    <alternativeName>
        <fullName>Suppressor of variegation 4-20 homolog 2</fullName>
        <shortName>Su(var)4-20 homolog 2</shortName>
        <shortName>Suv4-20h2</shortName>
    </alternativeName>
    <alternativeName>
        <fullName evidence="3">[histone H4]-N-methyl-L-lysine20 N-methyltransferase KMT5B</fullName>
        <ecNumber evidence="3">2.1.1.362</ecNumber>
    </alternativeName>
    <alternativeName>
        <fullName evidence="3">[histone H4]-lysine20 N-methyltransferase KMT5B</fullName>
        <ecNumber evidence="3">2.1.1.361</ecNumber>
    </alternativeName>
</protein>
<accession>A0JMZ4</accession>
<keyword id="KW-0156">Chromatin regulator</keyword>
<keyword id="KW-0158">Chromosome</keyword>
<keyword id="KW-0479">Metal-binding</keyword>
<keyword id="KW-0489">Methyltransferase</keyword>
<keyword id="KW-0539">Nucleus</keyword>
<keyword id="KW-1185">Reference proteome</keyword>
<keyword id="KW-0678">Repressor</keyword>
<keyword id="KW-0949">S-adenosyl-L-methionine</keyword>
<keyword id="KW-0804">Transcription</keyword>
<keyword id="KW-0805">Transcription regulation</keyword>
<keyword id="KW-0808">Transferase</keyword>
<keyword id="KW-0862">Zinc</keyword>
<proteinExistence type="evidence at transcript level"/>
<comment type="function">
    <text evidence="2 3">Histone methyltransferase that specifically methylates monomethylated 'Lys-20' (H4K20me1) and dimethylated 'Lys-20' (H4K20me2) of histone H4 to produce respectively dimethylated 'Lys-20' (H4K20me2) and trimethylated 'Lys-20' (H4K20me3) and thus regulates transcription and maintenance of genome integrity. In vitro also methylates unmodified 'Lys-20' (H4K20me0) of histone H4 and nucleosomes (By similarity). H4 'Lys-20' trimethylation represents a specific tag for epigenetic transcriptional repression. Mainly functions in pericentric heterochromatin regions, thereby playing a central role in the establishment of constitutive heterochromatin in these regions. KMT5C is targeted to histone H3 via its interaction with RB1 family proteins (RB1, RBL1 and RBL2) (By similarity). Facilitates TP53BP1 foci formation upon DNA damage and proficient non-homologous end-joining (NHEJ)-directed DNA repair by catalyzing the di- and trimethylation of 'Lys-20' of histone H4 (By similarity). May play a role in class switch reconbination by catalyzing the di- and trimethylation of 'Lys-20' of histone H4 (By similarity).</text>
</comment>
<comment type="catalytic activity">
    <reaction evidence="3">
        <text>N(6)-methyl-L-lysyl(20)-[histone H4] + S-adenosyl-L-methionine = N(6),N(6)-dimethyl-L-lysyl(20)-[histone H4] + S-adenosyl-L-homocysteine + H(+)</text>
        <dbReference type="Rhea" id="RHEA:60348"/>
        <dbReference type="Rhea" id="RHEA-COMP:15555"/>
        <dbReference type="Rhea" id="RHEA-COMP:15556"/>
        <dbReference type="ChEBI" id="CHEBI:15378"/>
        <dbReference type="ChEBI" id="CHEBI:57856"/>
        <dbReference type="ChEBI" id="CHEBI:59789"/>
        <dbReference type="ChEBI" id="CHEBI:61929"/>
        <dbReference type="ChEBI" id="CHEBI:61976"/>
        <dbReference type="EC" id="2.1.1.362"/>
    </reaction>
    <physiologicalReaction direction="left-to-right" evidence="3">
        <dbReference type="Rhea" id="RHEA:60349"/>
    </physiologicalReaction>
</comment>
<comment type="catalytic activity">
    <reaction evidence="3">
        <text>N(6),N(6)-dimethyl-L-lysyl(20)-[histone H4] + S-adenosyl-L-methionine = N(6),N(6),N(6)-trimethyl-L-lysyl(20)-[histone H4] + S-adenosyl-L-homocysteine + H(+)</text>
        <dbReference type="Rhea" id="RHEA:61992"/>
        <dbReference type="Rhea" id="RHEA-COMP:15556"/>
        <dbReference type="Rhea" id="RHEA-COMP:15998"/>
        <dbReference type="ChEBI" id="CHEBI:15378"/>
        <dbReference type="ChEBI" id="CHEBI:57856"/>
        <dbReference type="ChEBI" id="CHEBI:59789"/>
        <dbReference type="ChEBI" id="CHEBI:61961"/>
        <dbReference type="ChEBI" id="CHEBI:61976"/>
    </reaction>
    <physiologicalReaction direction="left-to-right" evidence="3">
        <dbReference type="Rhea" id="RHEA:61993"/>
    </physiologicalReaction>
</comment>
<comment type="catalytic activity">
    <reaction evidence="3">
        <text>L-lysyl(20)-[histone H4] + S-adenosyl-L-methionine = N(6)-methyl-L-lysyl(20)-[histone H4] + S-adenosyl-L-homocysteine + H(+)</text>
        <dbReference type="Rhea" id="RHEA:60344"/>
        <dbReference type="Rhea" id="RHEA-COMP:15554"/>
        <dbReference type="Rhea" id="RHEA-COMP:15555"/>
        <dbReference type="ChEBI" id="CHEBI:15378"/>
        <dbReference type="ChEBI" id="CHEBI:29969"/>
        <dbReference type="ChEBI" id="CHEBI:57856"/>
        <dbReference type="ChEBI" id="CHEBI:59789"/>
        <dbReference type="ChEBI" id="CHEBI:61929"/>
        <dbReference type="EC" id="2.1.1.361"/>
    </reaction>
</comment>
<comment type="subcellular location">
    <subcellularLocation>
        <location>Nucleus</location>
    </subcellularLocation>
    <subcellularLocation>
        <location evidence="1">Chromosome</location>
    </subcellularLocation>
    <text evidence="1">Associated with pericentric heterochromatin.</text>
</comment>
<comment type="similarity">
    <text evidence="5">Belongs to the class V-like SAM-binding methyltransferase superfamily. Histone-lysine methyltransferase family. Suvar4-20 subfamily.</text>
</comment>
<dbReference type="EC" id="2.1.1.362" evidence="3"/>
<dbReference type="EC" id="2.1.1.361" evidence="3"/>
<dbReference type="EMBL" id="BC126060">
    <property type="protein sequence ID" value="AAI26061.1"/>
    <property type="molecule type" value="mRNA"/>
</dbReference>
<dbReference type="RefSeq" id="NP_001090519.1">
    <property type="nucleotide sequence ID" value="NM_001097050.1"/>
</dbReference>
<dbReference type="SMR" id="A0JMZ4"/>
<dbReference type="DNASU" id="779432"/>
<dbReference type="GeneID" id="779432"/>
<dbReference type="KEGG" id="xla:779432"/>
<dbReference type="AGR" id="Xenbase:XB-GENE-6252183"/>
<dbReference type="CTD" id="779432"/>
<dbReference type="Xenbase" id="XB-GENE-6252183">
    <property type="gene designation" value="kmt5c.L"/>
</dbReference>
<dbReference type="OrthoDB" id="6627536at2759"/>
<dbReference type="Proteomes" id="UP000186698">
    <property type="component" value="Chromosome 7L"/>
</dbReference>
<dbReference type="Bgee" id="779432">
    <property type="expression patterns" value="Expressed in egg cell and 19 other cell types or tissues"/>
</dbReference>
<dbReference type="GO" id="GO:0005694">
    <property type="term" value="C:chromosome"/>
    <property type="evidence" value="ECO:0007669"/>
    <property type="project" value="UniProtKB-SubCell"/>
</dbReference>
<dbReference type="GO" id="GO:0005634">
    <property type="term" value="C:nucleus"/>
    <property type="evidence" value="ECO:0000318"/>
    <property type="project" value="GO_Central"/>
</dbReference>
<dbReference type="GO" id="GO:0003682">
    <property type="term" value="F:chromatin binding"/>
    <property type="evidence" value="ECO:0000250"/>
    <property type="project" value="UniProtKB"/>
</dbReference>
<dbReference type="GO" id="GO:0042799">
    <property type="term" value="F:histone H4K20 methyltransferase activity"/>
    <property type="evidence" value="ECO:0000250"/>
    <property type="project" value="UniProtKB"/>
</dbReference>
<dbReference type="GO" id="GO:0140944">
    <property type="term" value="F:histone H4K20 monomethyltransferase activity"/>
    <property type="evidence" value="ECO:0007669"/>
    <property type="project" value="UniProtKB-EC"/>
</dbReference>
<dbReference type="GO" id="GO:0140941">
    <property type="term" value="F:histone H4K20me methyltransferase activity"/>
    <property type="evidence" value="ECO:0007669"/>
    <property type="project" value="UniProtKB-EC"/>
</dbReference>
<dbReference type="GO" id="GO:0046872">
    <property type="term" value="F:metal ion binding"/>
    <property type="evidence" value="ECO:0007669"/>
    <property type="project" value="UniProtKB-KW"/>
</dbReference>
<dbReference type="GO" id="GO:1904047">
    <property type="term" value="F:S-adenosyl-L-methionine binding"/>
    <property type="evidence" value="ECO:0000250"/>
    <property type="project" value="UniProtKB"/>
</dbReference>
<dbReference type="GO" id="GO:0006281">
    <property type="term" value="P:DNA repair"/>
    <property type="evidence" value="ECO:0000250"/>
    <property type="project" value="UniProtKB"/>
</dbReference>
<dbReference type="GO" id="GO:0032259">
    <property type="term" value="P:methylation"/>
    <property type="evidence" value="ECO:0007669"/>
    <property type="project" value="UniProtKB-KW"/>
</dbReference>
<dbReference type="GO" id="GO:2001034">
    <property type="term" value="P:positive regulation of double-strand break repair via nonhomologous end joining"/>
    <property type="evidence" value="ECO:0000250"/>
    <property type="project" value="UniProtKB"/>
</dbReference>
<dbReference type="GO" id="GO:0045830">
    <property type="term" value="P:positive regulation of isotype switching"/>
    <property type="evidence" value="ECO:0000250"/>
    <property type="project" value="UniProtKB"/>
</dbReference>
<dbReference type="FunFam" id="1.10.10.1700:FF:000001">
    <property type="entry name" value="Histone-lysine N-methyltransferase"/>
    <property type="match status" value="1"/>
</dbReference>
<dbReference type="FunFam" id="2.170.270.10:FF:000006">
    <property type="entry name" value="Histone-lysine N-methyltransferase"/>
    <property type="match status" value="1"/>
</dbReference>
<dbReference type="Gene3D" id="1.10.10.1700">
    <property type="entry name" value="Histone-lysine N-methyltransferase"/>
    <property type="match status" value="1"/>
</dbReference>
<dbReference type="Gene3D" id="2.170.270.10">
    <property type="entry name" value="SET domain"/>
    <property type="match status" value="1"/>
</dbReference>
<dbReference type="InterPro" id="IPR041938">
    <property type="entry name" value="Hist-Lys_N-MTase_N"/>
</dbReference>
<dbReference type="InterPro" id="IPR001214">
    <property type="entry name" value="SET_dom"/>
</dbReference>
<dbReference type="InterPro" id="IPR046341">
    <property type="entry name" value="SET_dom_sf"/>
</dbReference>
<dbReference type="InterPro" id="IPR039977">
    <property type="entry name" value="Suv4-20/Set9"/>
</dbReference>
<dbReference type="InterPro" id="IPR025790">
    <property type="entry name" value="Suv4-20_animal"/>
</dbReference>
<dbReference type="PANTHER" id="PTHR12977:SF11">
    <property type="entry name" value="HISTONE-LYSINE N-METHYLTRANSFERASE KMT5C"/>
    <property type="match status" value="1"/>
</dbReference>
<dbReference type="PANTHER" id="PTHR12977">
    <property type="entry name" value="SUPPRESSOR OF VARIEGATION 4-20-RELATED"/>
    <property type="match status" value="1"/>
</dbReference>
<dbReference type="Pfam" id="PF00856">
    <property type="entry name" value="SET"/>
    <property type="match status" value="1"/>
</dbReference>
<dbReference type="SMART" id="SM00317">
    <property type="entry name" value="SET"/>
    <property type="match status" value="1"/>
</dbReference>
<dbReference type="SUPFAM" id="SSF82199">
    <property type="entry name" value="SET domain"/>
    <property type="match status" value="1"/>
</dbReference>
<dbReference type="PROSITE" id="PS51570">
    <property type="entry name" value="SAM_MT43_SUVAR420_2"/>
    <property type="match status" value="1"/>
</dbReference>
<dbReference type="PROSITE" id="PS50280">
    <property type="entry name" value="SET"/>
    <property type="match status" value="1"/>
</dbReference>
<evidence type="ECO:0000250" key="1"/>
<evidence type="ECO:0000250" key="2">
    <source>
        <dbReference type="UniProtKB" id="Q6Q783"/>
    </source>
</evidence>
<evidence type="ECO:0000250" key="3">
    <source>
        <dbReference type="UniProtKB" id="Q86Y97"/>
    </source>
</evidence>
<evidence type="ECO:0000255" key="4">
    <source>
        <dbReference type="PROSITE-ProRule" id="PRU00190"/>
    </source>
</evidence>
<evidence type="ECO:0000255" key="5">
    <source>
        <dbReference type="PROSITE-ProRule" id="PRU00903"/>
    </source>
</evidence>
<evidence type="ECO:0000256" key="6">
    <source>
        <dbReference type="SAM" id="MobiDB-lite"/>
    </source>
</evidence>
<evidence type="ECO:0000305" key="7"/>
<gene>
    <name evidence="3" type="primary">kmt5c</name>
    <name type="synonym">suv420h2</name>
</gene>
<sequence>MGSNRLTARELCENDDLATSLVLDPYLGFRTHKMNVSAMPTIRRQHHLREALQTFCKKKDLEAAYQSLTAGGWARHYFHSRTRQQESLLKTHIFRYLRMFLPESGFMILSCSRYSLEMNGAKVVSTKSWSKNEKIELLVGCIAELSKADETLLRFGDNDFSVMYSTRKKCAQLWLGPAAFINHDCRPNCKFVPTEGNTACVKVLREIKTGEEITCFYGDSFFGEKNEMCECCTCERKGDGAFKQQNTEQTVSTSLEKYQLRETDGRLKRLSESACKPSPQVTTKKKGSKLRLSLRLKRIPASRRKGAFYRRVKTFASSRYFYKSHLMKHIPLKPVKIALPRGTVLRDVRIILHNCKKCNQASRPKSQHERQCCKLGKEPLVSLRREDLSPERLKFRLSCPGGSCPPIIQTANVGCNAKDCSQTEAGKSNLEQITTAELCEHLSFSPVPSHNEDDNSFYEPEIPGSLLGPESPSSEPLSNNLNLECNSPEPIVINTVYPHYNGGVTSDSHPHALKQFGITHYIQVDLRKDVTLEPGRSQPDKSSLEAEKKQIPNNKHSQHPVISDDHLVANLNAETQSNAVSPPTNTPICEALNGSLEHKVFSLRSRPVSFRPRKTSDNKITLFKRRRSSVKQGVRCVKLNGHVKLTGQLVPSKLHPPPGAGANHLTDAMHSDPKLLLKPYVELGLNNNLKRQSLTGLPPSTVLTGDAFNILHSPPASKQSTEGATKNVAFNPFTPSKRLRLVVSHGSIALDMASTSSEETS</sequence>
<feature type="chain" id="PRO_0000281796" description="Histone-lysine N-methyltransferase KMT5C">
    <location>
        <begin position="1"/>
        <end position="761"/>
    </location>
</feature>
<feature type="domain" description="SET" evidence="4">
    <location>
        <begin position="109"/>
        <end position="218"/>
    </location>
</feature>
<feature type="region of interest" description="Disordered" evidence="6">
    <location>
        <begin position="445"/>
        <end position="480"/>
    </location>
</feature>
<feature type="region of interest" description="Disordered" evidence="6">
    <location>
        <begin position="532"/>
        <end position="560"/>
    </location>
</feature>
<feature type="compositionally biased region" description="Low complexity" evidence="6">
    <location>
        <begin position="463"/>
        <end position="480"/>
    </location>
</feature>
<feature type="compositionally biased region" description="Basic and acidic residues" evidence="6">
    <location>
        <begin position="538"/>
        <end position="550"/>
    </location>
</feature>
<feature type="binding site" evidence="3">
    <location>
        <position position="32"/>
    </location>
    <ligand>
        <name>S-adenosyl-L-methionine</name>
        <dbReference type="ChEBI" id="CHEBI:59789"/>
    </ligand>
</feature>
<feature type="binding site" evidence="3">
    <location>
        <begin position="114"/>
        <end position="117"/>
    </location>
    <ligand>
        <name>S-adenosyl-L-methionine</name>
        <dbReference type="ChEBI" id="CHEBI:59789"/>
    </ligand>
</feature>
<feature type="binding site" evidence="3">
    <location>
        <position position="121"/>
    </location>
    <ligand>
        <name>S-adenosyl-L-methionine</name>
        <dbReference type="ChEBI" id="CHEBI:59789"/>
    </ligand>
</feature>
<feature type="binding site" evidence="3">
    <location>
        <position position="160"/>
    </location>
    <ligand>
        <name>S-adenosyl-L-methionine</name>
        <dbReference type="ChEBI" id="CHEBI:59789"/>
    </ligand>
</feature>
<feature type="binding site" evidence="3">
    <location>
        <begin position="182"/>
        <end position="183"/>
    </location>
    <ligand>
        <name>S-adenosyl-L-methionine</name>
        <dbReference type="ChEBI" id="CHEBI:59789"/>
    </ligand>
</feature>
<feature type="binding site" evidence="3">
    <location>
        <position position="185"/>
    </location>
    <ligand>
        <name>Zn(2+)</name>
        <dbReference type="ChEBI" id="CHEBI:29105"/>
    </ligand>
</feature>
<feature type="binding site" evidence="3">
    <location>
        <position position="229"/>
    </location>
    <ligand>
        <name>Zn(2+)</name>
        <dbReference type="ChEBI" id="CHEBI:29105"/>
    </ligand>
</feature>
<feature type="binding site" evidence="3">
    <location>
        <position position="230"/>
    </location>
    <ligand>
        <name>S-adenosyl-L-methionine</name>
        <dbReference type="ChEBI" id="CHEBI:59789"/>
    </ligand>
</feature>
<feature type="binding site" evidence="3">
    <location>
        <position position="231"/>
    </location>
    <ligand>
        <name>Zn(2+)</name>
        <dbReference type="ChEBI" id="CHEBI:29105"/>
    </ligand>
</feature>
<feature type="binding site" evidence="3">
    <location>
        <position position="234"/>
    </location>
    <ligand>
        <name>Zn(2+)</name>
        <dbReference type="ChEBI" id="CHEBI:29105"/>
    </ligand>
</feature>
<organism>
    <name type="scientific">Xenopus laevis</name>
    <name type="common">African clawed frog</name>
    <dbReference type="NCBI Taxonomy" id="8355"/>
    <lineage>
        <taxon>Eukaryota</taxon>
        <taxon>Metazoa</taxon>
        <taxon>Chordata</taxon>
        <taxon>Craniata</taxon>
        <taxon>Vertebrata</taxon>
        <taxon>Euteleostomi</taxon>
        <taxon>Amphibia</taxon>
        <taxon>Batrachia</taxon>
        <taxon>Anura</taxon>
        <taxon>Pipoidea</taxon>
        <taxon>Pipidae</taxon>
        <taxon>Xenopodinae</taxon>
        <taxon>Xenopus</taxon>
        <taxon>Xenopus</taxon>
    </lineage>
</organism>
<reference key="1">
    <citation type="submission" date="2006-10" db="EMBL/GenBank/DDBJ databases">
        <authorList>
            <consortium name="NIH - Xenopus Gene Collection (XGC) project"/>
        </authorList>
    </citation>
    <scope>NUCLEOTIDE SEQUENCE [LARGE SCALE MRNA]</scope>
    <source>
        <tissue>Oocyte</tissue>
    </source>
</reference>
<name>KMT5C_XENLA</name>